<gene>
    <name type="primary">marchf3</name>
    <name type="synonym">march3</name>
</gene>
<reference key="1">
    <citation type="submission" date="2004-08" db="EMBL/GenBank/DDBJ databases">
        <authorList>
            <consortium name="NIH - Xenopus Gene Collection (XGC) project"/>
        </authorList>
    </citation>
    <scope>NUCLEOTIDE SEQUENCE [LARGE SCALE MRNA]</scope>
    <source>
        <tissue>Embryo</tissue>
    </source>
</reference>
<sequence>MTTSRCSHLPEVLPDCTSSAPSGKTVEDCSSLVNGQPQYVMQVSAKDGQLLSTVVRTLTTQSFNDRPMCRICHEGSTQEDLLSPCECTGTLGTIHRSCLEHWLSSSNTSYCELCHFRFSVERKPRPLVEWLRNPGPQHEKRTLFGDMVCFLFITPLATISGWLCLRGAVDHLHFSSRLEAVGLIALTVALFTIYLFWTLVSFRYHCRLYNEWRRTNQRVILVIPKSANLPSAQQSLLGLHSFKRNSKETIV</sequence>
<proteinExistence type="evidence at transcript level"/>
<dbReference type="EC" id="2.3.2.27"/>
<dbReference type="EMBL" id="BC079935">
    <property type="protein sequence ID" value="AAH79935.1"/>
    <property type="molecule type" value="mRNA"/>
</dbReference>
<dbReference type="RefSeq" id="NP_001007499.1">
    <property type="nucleotide sequence ID" value="NM_001007498.1"/>
</dbReference>
<dbReference type="SMR" id="Q68FA7"/>
<dbReference type="FunCoup" id="Q68FA7">
    <property type="interactions" value="557"/>
</dbReference>
<dbReference type="STRING" id="8364.ENSXETP00000046506"/>
<dbReference type="PaxDb" id="8364-ENSXETP00000011218"/>
<dbReference type="DNASU" id="493225"/>
<dbReference type="GeneID" id="493225"/>
<dbReference type="KEGG" id="xtr:493225"/>
<dbReference type="AGR" id="Xenbase:XB-GENE-491983"/>
<dbReference type="CTD" id="115123"/>
<dbReference type="Xenbase" id="XB-GENE-491983">
    <property type="gene designation" value="marchf3"/>
</dbReference>
<dbReference type="eggNOG" id="KOG1609">
    <property type="taxonomic scope" value="Eukaryota"/>
</dbReference>
<dbReference type="HOGENOM" id="CLU_096532_0_0_1"/>
<dbReference type="InParanoid" id="Q68FA7"/>
<dbReference type="OMA" id="FNDQPIC"/>
<dbReference type="OrthoDB" id="273089at2759"/>
<dbReference type="PhylomeDB" id="Q68FA7"/>
<dbReference type="UniPathway" id="UPA00143"/>
<dbReference type="Proteomes" id="UP000008143">
    <property type="component" value="Chromosome 1"/>
</dbReference>
<dbReference type="Bgee" id="ENSXETG00000005160">
    <property type="expression patterns" value="Expressed in heart and 13 other cell types or tissues"/>
</dbReference>
<dbReference type="GO" id="GO:0031901">
    <property type="term" value="C:early endosome membrane"/>
    <property type="evidence" value="ECO:0007669"/>
    <property type="project" value="UniProtKB-SubCell"/>
</dbReference>
<dbReference type="GO" id="GO:0005768">
    <property type="term" value="C:endosome"/>
    <property type="evidence" value="ECO:0000250"/>
    <property type="project" value="UniProtKB"/>
</dbReference>
<dbReference type="GO" id="GO:0005764">
    <property type="term" value="C:lysosome"/>
    <property type="evidence" value="ECO:0000250"/>
    <property type="project" value="UniProtKB"/>
</dbReference>
<dbReference type="GO" id="GO:0016740">
    <property type="term" value="F:transferase activity"/>
    <property type="evidence" value="ECO:0007669"/>
    <property type="project" value="UniProtKB-KW"/>
</dbReference>
<dbReference type="GO" id="GO:0008270">
    <property type="term" value="F:zinc ion binding"/>
    <property type="evidence" value="ECO:0007669"/>
    <property type="project" value="UniProtKB-KW"/>
</dbReference>
<dbReference type="GO" id="GO:0006897">
    <property type="term" value="P:endocytosis"/>
    <property type="evidence" value="ECO:0007669"/>
    <property type="project" value="UniProtKB-KW"/>
</dbReference>
<dbReference type="GO" id="GO:0016567">
    <property type="term" value="P:protein ubiquitination"/>
    <property type="evidence" value="ECO:0007669"/>
    <property type="project" value="UniProtKB-UniPathway"/>
</dbReference>
<dbReference type="FunFam" id="3.30.40.10:FF:000119">
    <property type="entry name" value="E3 ubiquitin-protein ligase MARCH2"/>
    <property type="match status" value="1"/>
</dbReference>
<dbReference type="Gene3D" id="3.30.40.10">
    <property type="entry name" value="Zinc/RING finger domain, C3HC4 (zinc finger)"/>
    <property type="match status" value="1"/>
</dbReference>
<dbReference type="InterPro" id="IPR001841">
    <property type="entry name" value="Znf_RING"/>
</dbReference>
<dbReference type="InterPro" id="IPR011016">
    <property type="entry name" value="Znf_RING-CH"/>
</dbReference>
<dbReference type="InterPro" id="IPR013083">
    <property type="entry name" value="Znf_RING/FYVE/PHD"/>
</dbReference>
<dbReference type="PANTHER" id="PTHR46065">
    <property type="entry name" value="E3 UBIQUITIN-PROTEIN LIGASE MARCH 2/3 FAMILY MEMBER"/>
    <property type="match status" value="1"/>
</dbReference>
<dbReference type="PANTHER" id="PTHR46065:SF2">
    <property type="entry name" value="E3 UBIQUITIN-PROTEIN LIGASE MARCHF3"/>
    <property type="match status" value="1"/>
</dbReference>
<dbReference type="Pfam" id="PF12906">
    <property type="entry name" value="RINGv"/>
    <property type="match status" value="1"/>
</dbReference>
<dbReference type="SMART" id="SM00744">
    <property type="entry name" value="RINGv"/>
    <property type="match status" value="1"/>
</dbReference>
<dbReference type="SUPFAM" id="SSF57850">
    <property type="entry name" value="RING/U-box"/>
    <property type="match status" value="1"/>
</dbReference>
<dbReference type="PROSITE" id="PS51292">
    <property type="entry name" value="ZF_RING_CH"/>
    <property type="match status" value="1"/>
</dbReference>
<evidence type="ECO:0000250" key="1"/>
<evidence type="ECO:0000250" key="2">
    <source>
        <dbReference type="UniProtKB" id="Q5XIE5"/>
    </source>
</evidence>
<evidence type="ECO:0000255" key="3"/>
<evidence type="ECO:0000255" key="4">
    <source>
        <dbReference type="PROSITE-ProRule" id="PRU00623"/>
    </source>
</evidence>
<evidence type="ECO:0000305" key="5"/>
<comment type="function">
    <text evidence="2">E3 ubiquitin-protein ligase which may be involved in endosomal trafficking. E3 ubiquitin ligases accept ubiquitin from an E2 ubiquitin-conjugating enzyme in the form of a thioester and then directly transfer the ubiquitin to targeted substrates.</text>
</comment>
<comment type="catalytic activity">
    <reaction>
        <text>S-ubiquitinyl-[E2 ubiquitin-conjugating enzyme]-L-cysteine + [acceptor protein]-L-lysine = [E2 ubiquitin-conjugating enzyme]-L-cysteine + N(6)-ubiquitinyl-[acceptor protein]-L-lysine.</text>
        <dbReference type="EC" id="2.3.2.27"/>
    </reaction>
</comment>
<comment type="pathway">
    <text>Protein modification; protein ubiquitination.</text>
</comment>
<comment type="subcellular location">
    <subcellularLocation>
        <location>Cytoplasmic vesicle membrane</location>
        <topology>Multi-pass membrane protein</topology>
    </subcellularLocation>
    <subcellularLocation>
        <location evidence="1">Early endosome membrane</location>
        <topology evidence="1">Multi-pass membrane protein</topology>
    </subcellularLocation>
</comment>
<comment type="domain">
    <text evidence="4">The RING-CH-type zinc finger domain is required for E3 ligase activity.</text>
</comment>
<protein>
    <recommendedName>
        <fullName>E3 ubiquitin-protein ligase MARCHF3</fullName>
        <ecNumber>2.3.2.27</ecNumber>
    </recommendedName>
    <alternativeName>
        <fullName>Membrane-associated RING finger protein 3</fullName>
    </alternativeName>
    <alternativeName>
        <fullName>Membrane-associated RING-CH protein III</fullName>
        <shortName>MARCH-III</shortName>
    </alternativeName>
    <alternativeName>
        <fullName evidence="5">RING-type E3 ubiquitin transferase MARCHF3</fullName>
    </alternativeName>
</protein>
<name>MARH3_XENTR</name>
<accession>Q68FA7</accession>
<organism>
    <name type="scientific">Xenopus tropicalis</name>
    <name type="common">Western clawed frog</name>
    <name type="synonym">Silurana tropicalis</name>
    <dbReference type="NCBI Taxonomy" id="8364"/>
    <lineage>
        <taxon>Eukaryota</taxon>
        <taxon>Metazoa</taxon>
        <taxon>Chordata</taxon>
        <taxon>Craniata</taxon>
        <taxon>Vertebrata</taxon>
        <taxon>Euteleostomi</taxon>
        <taxon>Amphibia</taxon>
        <taxon>Batrachia</taxon>
        <taxon>Anura</taxon>
        <taxon>Pipoidea</taxon>
        <taxon>Pipidae</taxon>
        <taxon>Xenopodinae</taxon>
        <taxon>Xenopus</taxon>
        <taxon>Silurana</taxon>
    </lineage>
</organism>
<keyword id="KW-0968">Cytoplasmic vesicle</keyword>
<keyword id="KW-0254">Endocytosis</keyword>
<keyword id="KW-0967">Endosome</keyword>
<keyword id="KW-0472">Membrane</keyword>
<keyword id="KW-0479">Metal-binding</keyword>
<keyword id="KW-1185">Reference proteome</keyword>
<keyword id="KW-0808">Transferase</keyword>
<keyword id="KW-0812">Transmembrane</keyword>
<keyword id="KW-1133">Transmembrane helix</keyword>
<keyword id="KW-0833">Ubl conjugation pathway</keyword>
<keyword id="KW-0862">Zinc</keyword>
<keyword id="KW-0863">Zinc-finger</keyword>
<feature type="chain" id="PRO_0000274509" description="E3 ubiquitin-protein ligase MARCHF3">
    <location>
        <begin position="1"/>
        <end position="251"/>
    </location>
</feature>
<feature type="transmembrane region" description="Helical" evidence="3">
    <location>
        <begin position="143"/>
        <end position="163"/>
    </location>
</feature>
<feature type="transmembrane region" description="Helical" evidence="3">
    <location>
        <begin position="180"/>
        <end position="200"/>
    </location>
</feature>
<feature type="zinc finger region" description="RING-CH-type" evidence="4">
    <location>
        <begin position="61"/>
        <end position="121"/>
    </location>
</feature>
<feature type="binding site" evidence="4">
    <location>
        <position position="69"/>
    </location>
    <ligand>
        <name>Zn(2+)</name>
        <dbReference type="ChEBI" id="CHEBI:29105"/>
        <label>1</label>
    </ligand>
</feature>
<feature type="binding site" evidence="4">
    <location>
        <position position="72"/>
    </location>
    <ligand>
        <name>Zn(2+)</name>
        <dbReference type="ChEBI" id="CHEBI:29105"/>
        <label>1</label>
    </ligand>
</feature>
<feature type="binding site" evidence="4">
    <location>
        <position position="85"/>
    </location>
    <ligand>
        <name>Zn(2+)</name>
        <dbReference type="ChEBI" id="CHEBI:29105"/>
        <label>2</label>
    </ligand>
</feature>
<feature type="binding site" evidence="4">
    <location>
        <position position="87"/>
    </location>
    <ligand>
        <name>Zn(2+)</name>
        <dbReference type="ChEBI" id="CHEBI:29105"/>
        <label>2</label>
    </ligand>
</feature>
<feature type="binding site" evidence="4">
    <location>
        <position position="95"/>
    </location>
    <ligand>
        <name>Zn(2+)</name>
        <dbReference type="ChEBI" id="CHEBI:29105"/>
        <label>1</label>
    </ligand>
</feature>
<feature type="binding site" evidence="4">
    <location>
        <position position="98"/>
    </location>
    <ligand>
        <name>Zn(2+)</name>
        <dbReference type="ChEBI" id="CHEBI:29105"/>
        <label>1</label>
    </ligand>
</feature>
<feature type="binding site" evidence="4">
    <location>
        <position position="111"/>
    </location>
    <ligand>
        <name>Zn(2+)</name>
        <dbReference type="ChEBI" id="CHEBI:29105"/>
        <label>2</label>
    </ligand>
</feature>
<feature type="binding site" evidence="4">
    <location>
        <position position="114"/>
    </location>
    <ligand>
        <name>Zn(2+)</name>
        <dbReference type="ChEBI" id="CHEBI:29105"/>
        <label>2</label>
    </ligand>
</feature>